<proteinExistence type="inferred from homology"/>
<accession>Q886P1</accession>
<comment type="function">
    <text evidence="1">Catalyzes the reversible phosphorylation of UMP to UDP.</text>
</comment>
<comment type="catalytic activity">
    <reaction evidence="1">
        <text>UMP + ATP = UDP + ADP</text>
        <dbReference type="Rhea" id="RHEA:24400"/>
        <dbReference type="ChEBI" id="CHEBI:30616"/>
        <dbReference type="ChEBI" id="CHEBI:57865"/>
        <dbReference type="ChEBI" id="CHEBI:58223"/>
        <dbReference type="ChEBI" id="CHEBI:456216"/>
        <dbReference type="EC" id="2.7.4.22"/>
    </reaction>
</comment>
<comment type="activity regulation">
    <text evidence="1">Inhibited by UTP.</text>
</comment>
<comment type="pathway">
    <text evidence="1">Pyrimidine metabolism; CTP biosynthesis via de novo pathway; UDP from UMP (UMPK route): step 1/1.</text>
</comment>
<comment type="subunit">
    <text evidence="1">Homohexamer.</text>
</comment>
<comment type="subcellular location">
    <subcellularLocation>
        <location evidence="1">Cytoplasm</location>
    </subcellularLocation>
</comment>
<comment type="similarity">
    <text evidence="1">Belongs to the UMP kinase family.</text>
</comment>
<reference key="1">
    <citation type="journal article" date="2003" name="Proc. Natl. Acad. Sci. U.S.A.">
        <title>The complete genome sequence of the Arabidopsis and tomato pathogen Pseudomonas syringae pv. tomato DC3000.</title>
        <authorList>
            <person name="Buell C.R."/>
            <person name="Joardar V."/>
            <person name="Lindeberg M."/>
            <person name="Selengut J."/>
            <person name="Paulsen I.T."/>
            <person name="Gwinn M.L."/>
            <person name="Dodson R.J."/>
            <person name="DeBoy R.T."/>
            <person name="Durkin A.S."/>
            <person name="Kolonay J.F."/>
            <person name="Madupu R."/>
            <person name="Daugherty S.C."/>
            <person name="Brinkac L.M."/>
            <person name="Beanan M.J."/>
            <person name="Haft D.H."/>
            <person name="Nelson W.C."/>
            <person name="Davidsen T.M."/>
            <person name="Zafar N."/>
            <person name="Zhou L."/>
            <person name="Liu J."/>
            <person name="Yuan Q."/>
            <person name="Khouri H.M."/>
            <person name="Fedorova N.B."/>
            <person name="Tran B."/>
            <person name="Russell D."/>
            <person name="Berry K.J."/>
            <person name="Utterback T.R."/>
            <person name="Van Aken S.E."/>
            <person name="Feldblyum T.V."/>
            <person name="D'Ascenzo M."/>
            <person name="Deng W.-L."/>
            <person name="Ramos A.R."/>
            <person name="Alfano J.R."/>
            <person name="Cartinhour S."/>
            <person name="Chatterjee A.K."/>
            <person name="Delaney T.P."/>
            <person name="Lazarowitz S.G."/>
            <person name="Martin G.B."/>
            <person name="Schneider D.J."/>
            <person name="Tang X."/>
            <person name="Bender C.L."/>
            <person name="White O."/>
            <person name="Fraser C.M."/>
            <person name="Collmer A."/>
        </authorList>
    </citation>
    <scope>NUCLEOTIDE SEQUENCE [LARGE SCALE GENOMIC DNA]</scope>
    <source>
        <strain>ATCC BAA-871 / DC3000</strain>
    </source>
</reference>
<dbReference type="EC" id="2.7.4.22" evidence="1"/>
<dbReference type="EMBL" id="AE016853">
    <property type="protein sequence ID" value="AAO55056.1"/>
    <property type="molecule type" value="Genomic_DNA"/>
</dbReference>
<dbReference type="RefSeq" id="NP_791361.1">
    <property type="nucleotide sequence ID" value="NC_004578.1"/>
</dbReference>
<dbReference type="RefSeq" id="WP_002554728.1">
    <property type="nucleotide sequence ID" value="NC_004578.1"/>
</dbReference>
<dbReference type="SMR" id="Q886P1"/>
<dbReference type="STRING" id="223283.PSPTO_1536"/>
<dbReference type="GeneID" id="96217746"/>
<dbReference type="KEGG" id="pst:PSPTO_1536"/>
<dbReference type="PATRIC" id="fig|223283.9.peg.1562"/>
<dbReference type="eggNOG" id="COG0528">
    <property type="taxonomic scope" value="Bacteria"/>
</dbReference>
<dbReference type="HOGENOM" id="CLU_033861_0_0_6"/>
<dbReference type="OrthoDB" id="9807458at2"/>
<dbReference type="PhylomeDB" id="Q886P1"/>
<dbReference type="UniPathway" id="UPA00159">
    <property type="reaction ID" value="UER00275"/>
</dbReference>
<dbReference type="Proteomes" id="UP000002515">
    <property type="component" value="Chromosome"/>
</dbReference>
<dbReference type="GO" id="GO:0005829">
    <property type="term" value="C:cytosol"/>
    <property type="evidence" value="ECO:0007669"/>
    <property type="project" value="TreeGrafter"/>
</dbReference>
<dbReference type="GO" id="GO:0005524">
    <property type="term" value="F:ATP binding"/>
    <property type="evidence" value="ECO:0007669"/>
    <property type="project" value="UniProtKB-KW"/>
</dbReference>
<dbReference type="GO" id="GO:0033862">
    <property type="term" value="F:UMP kinase activity"/>
    <property type="evidence" value="ECO:0007669"/>
    <property type="project" value="UniProtKB-EC"/>
</dbReference>
<dbReference type="GO" id="GO:0044210">
    <property type="term" value="P:'de novo' CTP biosynthetic process"/>
    <property type="evidence" value="ECO:0007669"/>
    <property type="project" value="UniProtKB-UniRule"/>
</dbReference>
<dbReference type="GO" id="GO:0006225">
    <property type="term" value="P:UDP biosynthetic process"/>
    <property type="evidence" value="ECO:0007669"/>
    <property type="project" value="TreeGrafter"/>
</dbReference>
<dbReference type="CDD" id="cd04254">
    <property type="entry name" value="AAK_UMPK-PyrH-Ec"/>
    <property type="match status" value="1"/>
</dbReference>
<dbReference type="FunFam" id="3.40.1160.10:FF:000001">
    <property type="entry name" value="Uridylate kinase"/>
    <property type="match status" value="1"/>
</dbReference>
<dbReference type="Gene3D" id="3.40.1160.10">
    <property type="entry name" value="Acetylglutamate kinase-like"/>
    <property type="match status" value="1"/>
</dbReference>
<dbReference type="HAMAP" id="MF_01220_B">
    <property type="entry name" value="PyrH_B"/>
    <property type="match status" value="1"/>
</dbReference>
<dbReference type="InterPro" id="IPR036393">
    <property type="entry name" value="AceGlu_kinase-like_sf"/>
</dbReference>
<dbReference type="InterPro" id="IPR001048">
    <property type="entry name" value="Asp/Glu/Uridylate_kinase"/>
</dbReference>
<dbReference type="InterPro" id="IPR011817">
    <property type="entry name" value="Uridylate_kinase"/>
</dbReference>
<dbReference type="InterPro" id="IPR015963">
    <property type="entry name" value="Uridylate_kinase_bac"/>
</dbReference>
<dbReference type="NCBIfam" id="TIGR02075">
    <property type="entry name" value="pyrH_bact"/>
    <property type="match status" value="1"/>
</dbReference>
<dbReference type="PANTHER" id="PTHR42833">
    <property type="entry name" value="URIDYLATE KINASE"/>
    <property type="match status" value="1"/>
</dbReference>
<dbReference type="PANTHER" id="PTHR42833:SF4">
    <property type="entry name" value="URIDYLATE KINASE PUMPKIN, CHLOROPLASTIC"/>
    <property type="match status" value="1"/>
</dbReference>
<dbReference type="Pfam" id="PF00696">
    <property type="entry name" value="AA_kinase"/>
    <property type="match status" value="1"/>
</dbReference>
<dbReference type="PIRSF" id="PIRSF005650">
    <property type="entry name" value="Uridylate_kin"/>
    <property type="match status" value="1"/>
</dbReference>
<dbReference type="SUPFAM" id="SSF53633">
    <property type="entry name" value="Carbamate kinase-like"/>
    <property type="match status" value="1"/>
</dbReference>
<organism>
    <name type="scientific">Pseudomonas syringae pv. tomato (strain ATCC BAA-871 / DC3000)</name>
    <dbReference type="NCBI Taxonomy" id="223283"/>
    <lineage>
        <taxon>Bacteria</taxon>
        <taxon>Pseudomonadati</taxon>
        <taxon>Pseudomonadota</taxon>
        <taxon>Gammaproteobacteria</taxon>
        <taxon>Pseudomonadales</taxon>
        <taxon>Pseudomonadaceae</taxon>
        <taxon>Pseudomonas</taxon>
    </lineage>
</organism>
<protein>
    <recommendedName>
        <fullName evidence="1">Uridylate kinase</fullName>
        <shortName evidence="1">UK</shortName>
        <ecNumber evidence="1">2.7.4.22</ecNumber>
    </recommendedName>
    <alternativeName>
        <fullName evidence="1">Uridine monophosphate kinase</fullName>
        <shortName evidence="1">UMP kinase</shortName>
        <shortName evidence="1">UMPK</shortName>
    </alternativeName>
</protein>
<keyword id="KW-0067">ATP-binding</keyword>
<keyword id="KW-0963">Cytoplasm</keyword>
<keyword id="KW-0418">Kinase</keyword>
<keyword id="KW-0547">Nucleotide-binding</keyword>
<keyword id="KW-0665">Pyrimidine biosynthesis</keyword>
<keyword id="KW-1185">Reference proteome</keyword>
<keyword id="KW-0808">Transferase</keyword>
<sequence length="247" mass="26583">MAQQGSGYQARYKRILLKLSGEALMGSEEFGIDPKVLDRMALEVGQLVGIGVQVGLVIGGGNLFRGAALSAAGMDRVTGDHMGMLATVMNALAMRDALERANITAIVMSAISMLGVTDHYDRRKAMRHLSAKEVVIFAAGTGNPFFTTDSAACLRAIEIDADVVLKATKVDGVYTADPFKDPNAEKFDHLTYDEVLDRKLGVMDLTAICLCRDHKMPLRVFNMNKPGALLNIVHGGAEGTLIEEAQQ</sequence>
<feature type="chain" id="PRO_0000143872" description="Uridylate kinase">
    <location>
        <begin position="1"/>
        <end position="247"/>
    </location>
</feature>
<feature type="binding site" evidence="1">
    <location>
        <begin position="18"/>
        <end position="21"/>
    </location>
    <ligand>
        <name>ATP</name>
        <dbReference type="ChEBI" id="CHEBI:30616"/>
    </ligand>
</feature>
<feature type="binding site" evidence="1">
    <location>
        <position position="60"/>
    </location>
    <ligand>
        <name>UMP</name>
        <dbReference type="ChEBI" id="CHEBI:57865"/>
    </ligand>
</feature>
<feature type="binding site" evidence="1">
    <location>
        <position position="61"/>
    </location>
    <ligand>
        <name>ATP</name>
        <dbReference type="ChEBI" id="CHEBI:30616"/>
    </ligand>
</feature>
<feature type="binding site" evidence="1">
    <location>
        <position position="65"/>
    </location>
    <ligand>
        <name>ATP</name>
        <dbReference type="ChEBI" id="CHEBI:30616"/>
    </ligand>
</feature>
<feature type="binding site" evidence="1">
    <location>
        <position position="80"/>
    </location>
    <ligand>
        <name>UMP</name>
        <dbReference type="ChEBI" id="CHEBI:57865"/>
    </ligand>
</feature>
<feature type="binding site" evidence="1">
    <location>
        <begin position="141"/>
        <end position="148"/>
    </location>
    <ligand>
        <name>UMP</name>
        <dbReference type="ChEBI" id="CHEBI:57865"/>
    </ligand>
</feature>
<feature type="binding site" evidence="1">
    <location>
        <position position="168"/>
    </location>
    <ligand>
        <name>ATP</name>
        <dbReference type="ChEBI" id="CHEBI:30616"/>
    </ligand>
</feature>
<feature type="binding site" evidence="1">
    <location>
        <position position="174"/>
    </location>
    <ligand>
        <name>ATP</name>
        <dbReference type="ChEBI" id="CHEBI:30616"/>
    </ligand>
</feature>
<feature type="binding site" evidence="1">
    <location>
        <position position="177"/>
    </location>
    <ligand>
        <name>ATP</name>
        <dbReference type="ChEBI" id="CHEBI:30616"/>
    </ligand>
</feature>
<gene>
    <name evidence="1" type="primary">pyrH</name>
    <name type="ordered locus">PSPTO_1536</name>
</gene>
<evidence type="ECO:0000255" key="1">
    <source>
        <dbReference type="HAMAP-Rule" id="MF_01220"/>
    </source>
</evidence>
<name>PYRH_PSESM</name>